<reference key="1">
    <citation type="journal article" date="2013" name="Biomaterials">
        <title>Design of histidine-rich peptides with enhanced bioavailability and inhibitory activity against hepatitis C virus.</title>
        <authorList>
            <person name="Hong W."/>
            <person name="Zhang R."/>
            <person name="Di Z."/>
            <person name="He Y."/>
            <person name="Zhao Z."/>
            <person name="Hu J."/>
            <person name="Wu Y."/>
            <person name="Li W."/>
            <person name="Cao Z."/>
        </authorList>
    </citation>
    <scope>NUCLEOTIDE SEQUENCE [MRNA]</scope>
    <scope>SYNTHESIS OF 24-33</scope>
    <source>
        <tissue>Venom gland</tissue>
    </source>
</reference>
<accession>P0DMF2</accession>
<organism>
    <name type="scientific">Chaerilus tryznai</name>
    <name type="common">Scorpion</name>
    <dbReference type="NCBI Taxonomy" id="1464547"/>
    <lineage>
        <taxon>Eukaryota</taxon>
        <taxon>Metazoa</taxon>
        <taxon>Ecdysozoa</taxon>
        <taxon>Arthropoda</taxon>
        <taxon>Chelicerata</taxon>
        <taxon>Arachnida</taxon>
        <taxon>Scorpiones</taxon>
        <taxon>Chaerilida</taxon>
        <taxon>Chaeriloidea</taxon>
        <taxon>Chaerilidae</taxon>
        <taxon>Chaerilus</taxon>
    </lineage>
</organism>
<evidence type="ECO:0000250" key="1"/>
<evidence type="ECO:0000255" key="2"/>
<evidence type="ECO:0000303" key="3">
    <source>
    </source>
</evidence>
<evidence type="ECO:0000305" key="4"/>
<evidence type="ECO:0000305" key="5">
    <source>
    </source>
</evidence>
<protein>
    <recommendedName>
        <fullName evidence="3">Peptide Ctry2346</fullName>
    </recommendedName>
</protein>
<keyword id="KW-0027">Amidation</keyword>
<keyword id="KW-0929">Antimicrobial</keyword>
<keyword id="KW-0930">Antiviral protein</keyword>
<keyword id="KW-0472">Membrane</keyword>
<keyword id="KW-0964">Secreted</keyword>
<keyword id="KW-0732">Signal</keyword>
<keyword id="KW-1052">Target cell membrane</keyword>
<keyword id="KW-1053">Target membrane</keyword>
<proteinExistence type="inferred from homology"/>
<comment type="function">
    <text evidence="1">Antimicrobial peptide.</text>
</comment>
<comment type="subcellular location">
    <subcellularLocation>
        <location evidence="1">Secreted</location>
    </subcellularLocation>
    <subcellularLocation>
        <location evidence="1">Target cell membrane</location>
    </subcellularLocation>
    <text evidence="1">Forms an alpha-helical membrane channel in the prey.</text>
</comment>
<comment type="tissue specificity">
    <text evidence="4">Expressed by the venom gland.</text>
</comment>
<comment type="miscellaneous">
    <text evidence="5">Shows a low ability to inhibit hepatitis C virus (HCV) infection in Huh7.5.1 cells.</text>
</comment>
<comment type="similarity">
    <text evidence="4">Belongs to the non-disulfide-bridged peptide (NDBP) superfamily. Short antimicrobial peptide (group 4) family.</text>
</comment>
<feature type="signal peptide" evidence="2">
    <location>
        <begin position="1"/>
        <end position="23"/>
    </location>
</feature>
<feature type="peptide" id="PRO_0000428695" description="Peptide Ctry2346">
    <location>
        <begin position="24"/>
        <end position="33"/>
    </location>
</feature>
<feature type="propeptide" id="PRO_0000428696" evidence="1">
    <location>
        <begin position="37"/>
        <end position="84"/>
    </location>
</feature>
<feature type="modified residue" description="Leucine amide" evidence="1">
    <location>
        <position position="33"/>
    </location>
</feature>
<sequence length="84" mass="9235">MKTQTLLFTFSLVLLMVATQTEALLGGLLQSLLGKRGLLDNLLGKRGLLFGKRALTNQDLFDLAYDPSLSAADMDALEMLLENY</sequence>
<name>NDB4T_CHATY</name>
<dbReference type="SMR" id="P0DMF2"/>
<dbReference type="GO" id="GO:0005576">
    <property type="term" value="C:extracellular region"/>
    <property type="evidence" value="ECO:0007669"/>
    <property type="project" value="UniProtKB-SubCell"/>
</dbReference>
<dbReference type="GO" id="GO:0016020">
    <property type="term" value="C:membrane"/>
    <property type="evidence" value="ECO:0007669"/>
    <property type="project" value="UniProtKB-KW"/>
</dbReference>
<dbReference type="GO" id="GO:0044218">
    <property type="term" value="C:other organism cell membrane"/>
    <property type="evidence" value="ECO:0007669"/>
    <property type="project" value="UniProtKB-KW"/>
</dbReference>
<dbReference type="GO" id="GO:0050688">
    <property type="term" value="P:regulation of defense response to virus"/>
    <property type="evidence" value="ECO:0007669"/>
    <property type="project" value="UniProtKB-KW"/>
</dbReference>